<evidence type="ECO:0000255" key="1"/>
<keyword id="KW-0175">Coiled coil</keyword>
<keyword id="KW-1185">Reference proteome</keyword>
<keyword id="KW-0732">Signal</keyword>
<accession>O32189</accession>
<protein>
    <recommendedName>
        <fullName>Uncharacterized protein YusW</fullName>
    </recommendedName>
</protein>
<organism>
    <name type="scientific">Bacillus subtilis (strain 168)</name>
    <dbReference type="NCBI Taxonomy" id="224308"/>
    <lineage>
        <taxon>Bacteria</taxon>
        <taxon>Bacillati</taxon>
        <taxon>Bacillota</taxon>
        <taxon>Bacilli</taxon>
        <taxon>Bacillales</taxon>
        <taxon>Bacillaceae</taxon>
        <taxon>Bacillus</taxon>
    </lineage>
</organism>
<gene>
    <name type="primary">yusW</name>
    <name type="ordered locus">BSU32950</name>
</gene>
<dbReference type="EMBL" id="AL009126">
    <property type="protein sequence ID" value="CAB15284.1"/>
    <property type="molecule type" value="Genomic_DNA"/>
</dbReference>
<dbReference type="PIR" id="H70022">
    <property type="entry name" value="H70022"/>
</dbReference>
<dbReference type="RefSeq" id="WP_003228545.1">
    <property type="nucleotide sequence ID" value="NZ_OZ025638.1"/>
</dbReference>
<dbReference type="FunCoup" id="O32189">
    <property type="interactions" value="139"/>
</dbReference>
<dbReference type="STRING" id="224308.BSU32950"/>
<dbReference type="PaxDb" id="224308-BSU32950"/>
<dbReference type="DNASU" id="938599"/>
<dbReference type="EnsemblBacteria" id="CAB15284">
    <property type="protein sequence ID" value="CAB15284"/>
    <property type="gene ID" value="BSU_32950"/>
</dbReference>
<dbReference type="GeneID" id="938599"/>
<dbReference type="KEGG" id="bsu:BSU32950"/>
<dbReference type="PATRIC" id="fig|224308.179.peg.3571"/>
<dbReference type="InParanoid" id="O32189"/>
<dbReference type="OrthoDB" id="2855966at2"/>
<dbReference type="BioCyc" id="BSUB:BSU32950-MONOMER"/>
<dbReference type="Proteomes" id="UP000001570">
    <property type="component" value="Chromosome"/>
</dbReference>
<dbReference type="InterPro" id="IPR025623">
    <property type="entry name" value="YusW"/>
</dbReference>
<dbReference type="Pfam" id="PF14039">
    <property type="entry name" value="YusW"/>
    <property type="match status" value="1"/>
</dbReference>
<name>YUSW_BACSU</name>
<reference key="1">
    <citation type="journal article" date="1997" name="Nature">
        <title>The complete genome sequence of the Gram-positive bacterium Bacillus subtilis.</title>
        <authorList>
            <person name="Kunst F."/>
            <person name="Ogasawara N."/>
            <person name="Moszer I."/>
            <person name="Albertini A.M."/>
            <person name="Alloni G."/>
            <person name="Azevedo V."/>
            <person name="Bertero M.G."/>
            <person name="Bessieres P."/>
            <person name="Bolotin A."/>
            <person name="Borchert S."/>
            <person name="Borriss R."/>
            <person name="Boursier L."/>
            <person name="Brans A."/>
            <person name="Braun M."/>
            <person name="Brignell S.C."/>
            <person name="Bron S."/>
            <person name="Brouillet S."/>
            <person name="Bruschi C.V."/>
            <person name="Caldwell B."/>
            <person name="Capuano V."/>
            <person name="Carter N.M."/>
            <person name="Choi S.-K."/>
            <person name="Codani J.-J."/>
            <person name="Connerton I.F."/>
            <person name="Cummings N.J."/>
            <person name="Daniel R.A."/>
            <person name="Denizot F."/>
            <person name="Devine K.M."/>
            <person name="Duesterhoeft A."/>
            <person name="Ehrlich S.D."/>
            <person name="Emmerson P.T."/>
            <person name="Entian K.-D."/>
            <person name="Errington J."/>
            <person name="Fabret C."/>
            <person name="Ferrari E."/>
            <person name="Foulger D."/>
            <person name="Fritz C."/>
            <person name="Fujita M."/>
            <person name="Fujita Y."/>
            <person name="Fuma S."/>
            <person name="Galizzi A."/>
            <person name="Galleron N."/>
            <person name="Ghim S.-Y."/>
            <person name="Glaser P."/>
            <person name="Goffeau A."/>
            <person name="Golightly E.J."/>
            <person name="Grandi G."/>
            <person name="Guiseppi G."/>
            <person name="Guy B.J."/>
            <person name="Haga K."/>
            <person name="Haiech J."/>
            <person name="Harwood C.R."/>
            <person name="Henaut A."/>
            <person name="Hilbert H."/>
            <person name="Holsappel S."/>
            <person name="Hosono S."/>
            <person name="Hullo M.-F."/>
            <person name="Itaya M."/>
            <person name="Jones L.-M."/>
            <person name="Joris B."/>
            <person name="Karamata D."/>
            <person name="Kasahara Y."/>
            <person name="Klaerr-Blanchard M."/>
            <person name="Klein C."/>
            <person name="Kobayashi Y."/>
            <person name="Koetter P."/>
            <person name="Koningstein G."/>
            <person name="Krogh S."/>
            <person name="Kumano M."/>
            <person name="Kurita K."/>
            <person name="Lapidus A."/>
            <person name="Lardinois S."/>
            <person name="Lauber J."/>
            <person name="Lazarevic V."/>
            <person name="Lee S.-M."/>
            <person name="Levine A."/>
            <person name="Liu H."/>
            <person name="Masuda S."/>
            <person name="Mauel C."/>
            <person name="Medigue C."/>
            <person name="Medina N."/>
            <person name="Mellado R.P."/>
            <person name="Mizuno M."/>
            <person name="Moestl D."/>
            <person name="Nakai S."/>
            <person name="Noback M."/>
            <person name="Noone D."/>
            <person name="O'Reilly M."/>
            <person name="Ogawa K."/>
            <person name="Ogiwara A."/>
            <person name="Oudega B."/>
            <person name="Park S.-H."/>
            <person name="Parro V."/>
            <person name="Pohl T.M."/>
            <person name="Portetelle D."/>
            <person name="Porwollik S."/>
            <person name="Prescott A.M."/>
            <person name="Presecan E."/>
            <person name="Pujic P."/>
            <person name="Purnelle B."/>
            <person name="Rapoport G."/>
            <person name="Rey M."/>
            <person name="Reynolds S."/>
            <person name="Rieger M."/>
            <person name="Rivolta C."/>
            <person name="Rocha E."/>
            <person name="Roche B."/>
            <person name="Rose M."/>
            <person name="Sadaie Y."/>
            <person name="Sato T."/>
            <person name="Scanlan E."/>
            <person name="Schleich S."/>
            <person name="Schroeter R."/>
            <person name="Scoffone F."/>
            <person name="Sekiguchi J."/>
            <person name="Sekowska A."/>
            <person name="Seror S.J."/>
            <person name="Serror P."/>
            <person name="Shin B.-S."/>
            <person name="Soldo B."/>
            <person name="Sorokin A."/>
            <person name="Tacconi E."/>
            <person name="Takagi T."/>
            <person name="Takahashi H."/>
            <person name="Takemaru K."/>
            <person name="Takeuchi M."/>
            <person name="Tamakoshi A."/>
            <person name="Tanaka T."/>
            <person name="Terpstra P."/>
            <person name="Tognoni A."/>
            <person name="Tosato V."/>
            <person name="Uchiyama S."/>
            <person name="Vandenbol M."/>
            <person name="Vannier F."/>
            <person name="Vassarotti A."/>
            <person name="Viari A."/>
            <person name="Wambutt R."/>
            <person name="Wedler E."/>
            <person name="Wedler H."/>
            <person name="Weitzenegger T."/>
            <person name="Winters P."/>
            <person name="Wipat A."/>
            <person name="Yamamoto H."/>
            <person name="Yamane K."/>
            <person name="Yasumoto K."/>
            <person name="Yata K."/>
            <person name="Yoshida K."/>
            <person name="Yoshikawa H.-F."/>
            <person name="Zumstein E."/>
            <person name="Yoshikawa H."/>
            <person name="Danchin A."/>
        </authorList>
    </citation>
    <scope>NUCLEOTIDE SEQUENCE [LARGE SCALE GENOMIC DNA]</scope>
    <source>
        <strain>168</strain>
    </source>
</reference>
<feature type="signal peptide" evidence="1">
    <location>
        <begin position="1"/>
        <end position="29"/>
    </location>
</feature>
<feature type="chain" id="PRO_0000013731" description="Uncharacterized protein YusW">
    <location>
        <begin position="30"/>
        <end position="145"/>
    </location>
</feature>
<feature type="coiled-coil region" evidence="1">
    <location>
        <begin position="67"/>
        <end position="101"/>
    </location>
</feature>
<proteinExistence type="inferred from homology"/>
<sequence>MHLIRAAGAVCLAVVLIAGCRFNEDQHQAEGENTAVTQLKSVPYSNFSLRVSYGDGEHNRYEGIYTKNGTQEKAEIQDKLSGVNQEGEEALDEMKMILSELSVTDQMAETEVIHSVLAAFNLDSHYDHIDLKLKLKDGSIREIKK</sequence>